<proteinExistence type="inferred from homology"/>
<feature type="signal peptide" evidence="2">
    <location>
        <begin position="1"/>
        <end position="18"/>
    </location>
</feature>
<feature type="propeptide" id="PRO_0000412417" evidence="1">
    <location>
        <begin position="19"/>
        <end position="84"/>
    </location>
</feature>
<feature type="chain" id="PRO_0000412418" description="Leucine aminopeptidase 1">
    <location>
        <begin position="85"/>
        <end position="393"/>
    </location>
</feature>
<feature type="binding site" evidence="1">
    <location>
        <position position="184"/>
    </location>
    <ligand>
        <name>Zn(2+)</name>
        <dbReference type="ChEBI" id="CHEBI:29105"/>
        <label>1</label>
    </ligand>
</feature>
<feature type="binding site" evidence="1">
    <location>
        <position position="202"/>
    </location>
    <ligand>
        <name>Zn(2+)</name>
        <dbReference type="ChEBI" id="CHEBI:29105"/>
        <label>1</label>
    </ligand>
</feature>
<feature type="binding site" evidence="1">
    <location>
        <position position="202"/>
    </location>
    <ligand>
        <name>Zn(2+)</name>
        <dbReference type="ChEBI" id="CHEBI:29105"/>
        <label>2</label>
        <note>catalytic</note>
    </ligand>
</feature>
<feature type="binding site" evidence="1">
    <location>
        <position position="241"/>
    </location>
    <ligand>
        <name>Zn(2+)</name>
        <dbReference type="ChEBI" id="CHEBI:29105"/>
        <label>2</label>
        <note>catalytic</note>
    </ligand>
</feature>
<feature type="binding site" evidence="1">
    <location>
        <position position="268"/>
    </location>
    <ligand>
        <name>Zn(2+)</name>
        <dbReference type="ChEBI" id="CHEBI:29105"/>
        <label>1</label>
    </ligand>
</feature>
<feature type="binding site" evidence="1">
    <location>
        <position position="350"/>
    </location>
    <ligand>
        <name>Zn(2+)</name>
        <dbReference type="ChEBI" id="CHEBI:29105"/>
        <label>2</label>
        <note>catalytic</note>
    </ligand>
</feature>
<feature type="glycosylation site" description="N-linked (GlcNAc...) asparagine" evidence="2">
    <location>
        <position position="176"/>
    </location>
</feature>
<feature type="disulfide bond" evidence="1">
    <location>
        <begin position="317"/>
        <end position="321"/>
    </location>
</feature>
<protein>
    <recommendedName>
        <fullName>Leucine aminopeptidase 1</fullName>
        <ecNumber>3.4.11.-</ecNumber>
    </recommendedName>
    <alternativeName>
        <fullName>Leucyl aminopeptidase 1</fullName>
        <shortName>LAP1</shortName>
    </alternativeName>
</protein>
<name>LAP1_METRA</name>
<sequence>MKLSQVSALAACVPAATARFVELMEADHVVLRPDEPTFLIETAPGKTQWVTEEQKWELRRDGQRFMDITATKDLGSQGLRIKESVEFPKKCVNQDEVKSLAKNLDTAPMKANLEKLSSFHTRYYNSEWGLKSSDWVLEKVNEMIKEAGADKTVTAQSFPHTWKQHSVIATIPGQTNSTIVIGAHQDSINLWLPILAAPGADDDGSGTVTIMEVFRALLKSKDVVQGKAINTIEFHWYSAEEGGLLGSQAIFQQYEKQQRDVKAMLQQDMTGYVKGTLDAGLPESVGVIVDFVHAGLTKFIKTVIEQYCAIPWVETKCGYACSDHASASKAGYPSAFVIESSFDKSDPNIHTTSDLIEHLSFDHMLQHAHMTLGFVYELGFHNFAKAVEGDGEL</sequence>
<reference key="1">
    <citation type="journal article" date="2011" name="PLoS Genet.">
        <title>Genome sequencing and comparative transcriptomics of the model entomopathogenic fungi Metarhizium anisopliae and M. acridum.</title>
        <authorList>
            <person name="Gao Q."/>
            <person name="Jin K."/>
            <person name="Ying S.-H."/>
            <person name="Zhang Y."/>
            <person name="Xiao G."/>
            <person name="Shang Y."/>
            <person name="Duan Z."/>
            <person name="Hu X."/>
            <person name="Xie X.-Q."/>
            <person name="Zhou G."/>
            <person name="Peng G."/>
            <person name="Luo Z."/>
            <person name="Huang W."/>
            <person name="Wang B."/>
            <person name="Fang W."/>
            <person name="Wang S."/>
            <person name="Zhong Y."/>
            <person name="Ma L.-J."/>
            <person name="St Leger R.J."/>
            <person name="Zhao G.-P."/>
            <person name="Pei Y."/>
            <person name="Feng M.-G."/>
            <person name="Xia Y."/>
            <person name="Wang C."/>
        </authorList>
    </citation>
    <scope>NUCLEOTIDE SEQUENCE [LARGE SCALE GENOMIC DNA]</scope>
    <source>
        <strain>ARSEF 23 / ATCC MYA-3075</strain>
    </source>
</reference>
<reference key="2">
    <citation type="journal article" date="2014" name="Proc. Natl. Acad. Sci. U.S.A.">
        <title>Trajectory and genomic determinants of fungal-pathogen speciation and host adaptation.</title>
        <authorList>
            <person name="Hu X."/>
            <person name="Xiao G."/>
            <person name="Zheng P."/>
            <person name="Shang Y."/>
            <person name="Su Y."/>
            <person name="Zhang X."/>
            <person name="Liu X."/>
            <person name="Zhan S."/>
            <person name="St Leger R.J."/>
            <person name="Wang C."/>
        </authorList>
    </citation>
    <scope>GENOME REANNOTATION</scope>
    <source>
        <strain>ARSEF 23 / ATCC MYA-3075</strain>
    </source>
</reference>
<organism>
    <name type="scientific">Metarhizium robertsii (strain ARSEF 23 / ATCC MYA-3075)</name>
    <name type="common">Metarhizium anisopliae (strain ARSEF 23)</name>
    <dbReference type="NCBI Taxonomy" id="655844"/>
    <lineage>
        <taxon>Eukaryota</taxon>
        <taxon>Fungi</taxon>
        <taxon>Dikarya</taxon>
        <taxon>Ascomycota</taxon>
        <taxon>Pezizomycotina</taxon>
        <taxon>Sordariomycetes</taxon>
        <taxon>Hypocreomycetidae</taxon>
        <taxon>Hypocreales</taxon>
        <taxon>Clavicipitaceae</taxon>
        <taxon>Metarhizium</taxon>
    </lineage>
</organism>
<keyword id="KW-0031">Aminopeptidase</keyword>
<keyword id="KW-1015">Disulfide bond</keyword>
<keyword id="KW-0325">Glycoprotein</keyword>
<keyword id="KW-0378">Hydrolase</keyword>
<keyword id="KW-0479">Metal-binding</keyword>
<keyword id="KW-0645">Protease</keyword>
<keyword id="KW-0964">Secreted</keyword>
<keyword id="KW-0732">Signal</keyword>
<keyword id="KW-0862">Zinc</keyword>
<keyword id="KW-0865">Zymogen</keyword>
<comment type="function">
    <text evidence="1">Extracellular aminopeptidase that allows assimilation of proteinaceous substrates.</text>
</comment>
<comment type="cofactor">
    <cofactor evidence="1">
        <name>Zn(2+)</name>
        <dbReference type="ChEBI" id="CHEBI:29105"/>
    </cofactor>
    <text evidence="1">Binds 2 Zn(2+) ions per subunit.</text>
</comment>
<comment type="subunit">
    <text evidence="1">Monomer.</text>
</comment>
<comment type="subcellular location">
    <subcellularLocation>
        <location evidence="1">Secreted</location>
    </subcellularLocation>
</comment>
<comment type="similarity">
    <text evidence="3">Belongs to the peptidase M28 family. M28E subfamily.</text>
</comment>
<evidence type="ECO:0000250" key="1"/>
<evidence type="ECO:0000255" key="2"/>
<evidence type="ECO:0000305" key="3"/>
<dbReference type="EC" id="3.4.11.-"/>
<dbReference type="EMBL" id="ADNJ02000006">
    <property type="protein sequence ID" value="EFY98166.1"/>
    <property type="molecule type" value="Genomic_DNA"/>
</dbReference>
<dbReference type="RefSeq" id="XP_007822464.1">
    <property type="nucleotide sequence ID" value="XM_007824273.1"/>
</dbReference>
<dbReference type="SMR" id="E9F277"/>
<dbReference type="GlyCosmos" id="E9F277">
    <property type="glycosylation" value="1 site, No reported glycans"/>
</dbReference>
<dbReference type="GeneID" id="19260561"/>
<dbReference type="KEGG" id="maj:MAA_06275"/>
<dbReference type="HOGENOM" id="CLU_025866_0_0_1"/>
<dbReference type="OrthoDB" id="2214at2759"/>
<dbReference type="Proteomes" id="UP000002498">
    <property type="component" value="Unassembled WGS sequence"/>
</dbReference>
<dbReference type="GO" id="GO:0005576">
    <property type="term" value="C:extracellular region"/>
    <property type="evidence" value="ECO:0007669"/>
    <property type="project" value="UniProtKB-SubCell"/>
</dbReference>
<dbReference type="GO" id="GO:0004177">
    <property type="term" value="F:aminopeptidase activity"/>
    <property type="evidence" value="ECO:0007669"/>
    <property type="project" value="UniProtKB-KW"/>
</dbReference>
<dbReference type="GO" id="GO:0046872">
    <property type="term" value="F:metal ion binding"/>
    <property type="evidence" value="ECO:0007669"/>
    <property type="project" value="UniProtKB-KW"/>
</dbReference>
<dbReference type="GO" id="GO:0008235">
    <property type="term" value="F:metalloexopeptidase activity"/>
    <property type="evidence" value="ECO:0007669"/>
    <property type="project" value="InterPro"/>
</dbReference>
<dbReference type="GO" id="GO:0006508">
    <property type="term" value="P:proteolysis"/>
    <property type="evidence" value="ECO:0007669"/>
    <property type="project" value="UniProtKB-KW"/>
</dbReference>
<dbReference type="CDD" id="cd03879">
    <property type="entry name" value="M28_AAP"/>
    <property type="match status" value="1"/>
</dbReference>
<dbReference type="FunFam" id="3.40.630.10:FF:000042">
    <property type="entry name" value="Peptide hydrolase"/>
    <property type="match status" value="1"/>
</dbReference>
<dbReference type="Gene3D" id="3.40.630.10">
    <property type="entry name" value="Zn peptidases"/>
    <property type="match status" value="1"/>
</dbReference>
<dbReference type="InterPro" id="IPR018247">
    <property type="entry name" value="EF_Hand_1_Ca_BS"/>
</dbReference>
<dbReference type="InterPro" id="IPR045175">
    <property type="entry name" value="M28_fam"/>
</dbReference>
<dbReference type="InterPro" id="IPR007484">
    <property type="entry name" value="Peptidase_M28"/>
</dbReference>
<dbReference type="PANTHER" id="PTHR12147:SF56">
    <property type="entry name" value="AMINOPEPTIDASE YDR415C-RELATED"/>
    <property type="match status" value="1"/>
</dbReference>
<dbReference type="PANTHER" id="PTHR12147">
    <property type="entry name" value="METALLOPEPTIDASE M28 FAMILY MEMBER"/>
    <property type="match status" value="1"/>
</dbReference>
<dbReference type="Pfam" id="PF04389">
    <property type="entry name" value="Peptidase_M28"/>
    <property type="match status" value="1"/>
</dbReference>
<dbReference type="SUPFAM" id="SSF53187">
    <property type="entry name" value="Zn-dependent exopeptidases"/>
    <property type="match status" value="1"/>
</dbReference>
<dbReference type="PROSITE" id="PS00018">
    <property type="entry name" value="EF_HAND_1"/>
    <property type="match status" value="1"/>
</dbReference>
<gene>
    <name type="primary">LAP1</name>
    <name type="ORF">MAA_06275</name>
</gene>
<accession>E9F277</accession>